<protein>
    <recommendedName>
        <fullName evidence="1">Aspartate 1-decarboxylase</fullName>
        <ecNumber evidence="1">4.1.1.11</ecNumber>
    </recommendedName>
    <alternativeName>
        <fullName evidence="1">Aspartate alpha-decarboxylase</fullName>
    </alternativeName>
    <component>
        <recommendedName>
            <fullName evidence="1">Aspartate 1-decarboxylase beta chain</fullName>
        </recommendedName>
    </component>
    <component>
        <recommendedName>
            <fullName evidence="1">Aspartate 1-decarboxylase alpha chain</fullName>
        </recommendedName>
    </component>
</protein>
<comment type="function">
    <text evidence="1">Catalyzes the pyruvoyl-dependent decarboxylation of aspartate to produce beta-alanine.</text>
</comment>
<comment type="catalytic activity">
    <reaction evidence="1">
        <text>L-aspartate + H(+) = beta-alanine + CO2</text>
        <dbReference type="Rhea" id="RHEA:19497"/>
        <dbReference type="ChEBI" id="CHEBI:15378"/>
        <dbReference type="ChEBI" id="CHEBI:16526"/>
        <dbReference type="ChEBI" id="CHEBI:29991"/>
        <dbReference type="ChEBI" id="CHEBI:57966"/>
        <dbReference type="EC" id="4.1.1.11"/>
    </reaction>
</comment>
<comment type="cofactor">
    <cofactor evidence="1">
        <name>pyruvate</name>
        <dbReference type="ChEBI" id="CHEBI:15361"/>
    </cofactor>
    <text evidence="1">Binds 1 pyruvoyl group covalently per subunit.</text>
</comment>
<comment type="pathway">
    <text evidence="1">Cofactor biosynthesis; (R)-pantothenate biosynthesis; beta-alanine from L-aspartate: step 1/1.</text>
</comment>
<comment type="subunit">
    <text evidence="1">Heterooctamer of four alpha and four beta subunits.</text>
</comment>
<comment type="subcellular location">
    <subcellularLocation>
        <location evidence="1">Cytoplasm</location>
    </subcellularLocation>
</comment>
<comment type="PTM">
    <text evidence="1">Is synthesized initially as an inactive proenzyme, which is activated by self-cleavage at a specific serine bond to produce a beta-subunit with a hydroxyl group at its C-terminus and an alpha-subunit with a pyruvoyl group at its N-terminus.</text>
</comment>
<comment type="similarity">
    <text evidence="1">Belongs to the PanD family.</text>
</comment>
<keyword id="KW-0068">Autocatalytic cleavage</keyword>
<keyword id="KW-0963">Cytoplasm</keyword>
<keyword id="KW-0210">Decarboxylase</keyword>
<keyword id="KW-0456">Lyase</keyword>
<keyword id="KW-0566">Pantothenate biosynthesis</keyword>
<keyword id="KW-0670">Pyruvate</keyword>
<keyword id="KW-0704">Schiff base</keyword>
<keyword id="KW-0865">Zymogen</keyword>
<accession>C1AI59</accession>
<gene>
    <name evidence="1" type="primary">panD</name>
    <name type="ordered locus">JTY_3666</name>
</gene>
<feature type="chain" id="PRO_1000192015" description="Aspartate 1-decarboxylase beta chain" evidence="1">
    <location>
        <begin position="1"/>
        <end position="24"/>
    </location>
</feature>
<feature type="chain" id="PRO_1000192016" description="Aspartate 1-decarboxylase alpha chain" evidence="1">
    <location>
        <begin position="25"/>
        <end position="139"/>
    </location>
</feature>
<feature type="active site" description="Schiff-base intermediate with substrate; via pyruvic acid" evidence="1">
    <location>
        <position position="25"/>
    </location>
</feature>
<feature type="active site" description="Proton donor" evidence="1">
    <location>
        <position position="58"/>
    </location>
</feature>
<feature type="binding site" evidence="1">
    <location>
        <position position="57"/>
    </location>
    <ligand>
        <name>substrate</name>
    </ligand>
</feature>
<feature type="binding site" evidence="1">
    <location>
        <begin position="73"/>
        <end position="75"/>
    </location>
    <ligand>
        <name>substrate</name>
    </ligand>
</feature>
<feature type="modified residue" description="Pyruvic acid (Ser)" evidence="1">
    <location>
        <position position="25"/>
    </location>
</feature>
<name>PAND_MYCBT</name>
<reference key="1">
    <citation type="journal article" date="2009" name="Vaccine">
        <title>Whole genome sequence analysis of Mycobacterium bovis bacillus Calmette-Guerin (BCG) Tokyo 172: a comparative study of BCG vaccine substrains.</title>
        <authorList>
            <person name="Seki M."/>
            <person name="Honda I."/>
            <person name="Fujita I."/>
            <person name="Yano I."/>
            <person name="Yamamoto S."/>
            <person name="Koyama A."/>
        </authorList>
    </citation>
    <scope>NUCLEOTIDE SEQUENCE [LARGE SCALE GENOMIC DNA]</scope>
    <source>
        <strain>BCG / Tokyo 172 / ATCC 35737 / TMC 1019</strain>
    </source>
</reference>
<dbReference type="EC" id="4.1.1.11" evidence="1"/>
<dbReference type="EMBL" id="AP010918">
    <property type="protein sequence ID" value="BAH27938.1"/>
    <property type="molecule type" value="Genomic_DNA"/>
</dbReference>
<dbReference type="RefSeq" id="WP_003419523.1">
    <property type="nucleotide sequence ID" value="NZ_CP014566.1"/>
</dbReference>
<dbReference type="SMR" id="C1AI59"/>
<dbReference type="KEGG" id="mbt:JTY_3666"/>
<dbReference type="HOGENOM" id="CLU_115305_2_0_11"/>
<dbReference type="UniPathway" id="UPA00028">
    <property type="reaction ID" value="UER00002"/>
</dbReference>
<dbReference type="GO" id="GO:0005829">
    <property type="term" value="C:cytosol"/>
    <property type="evidence" value="ECO:0007669"/>
    <property type="project" value="TreeGrafter"/>
</dbReference>
<dbReference type="GO" id="GO:0004068">
    <property type="term" value="F:aspartate 1-decarboxylase activity"/>
    <property type="evidence" value="ECO:0007669"/>
    <property type="project" value="UniProtKB-UniRule"/>
</dbReference>
<dbReference type="GO" id="GO:0006523">
    <property type="term" value="P:alanine biosynthetic process"/>
    <property type="evidence" value="ECO:0007669"/>
    <property type="project" value="InterPro"/>
</dbReference>
<dbReference type="GO" id="GO:0015940">
    <property type="term" value="P:pantothenate biosynthetic process"/>
    <property type="evidence" value="ECO:0007669"/>
    <property type="project" value="UniProtKB-UniRule"/>
</dbReference>
<dbReference type="CDD" id="cd06919">
    <property type="entry name" value="Asp_decarbox"/>
    <property type="match status" value="1"/>
</dbReference>
<dbReference type="Gene3D" id="2.40.40.20">
    <property type="match status" value="1"/>
</dbReference>
<dbReference type="HAMAP" id="MF_00446">
    <property type="entry name" value="PanD"/>
    <property type="match status" value="1"/>
</dbReference>
<dbReference type="InterPro" id="IPR009010">
    <property type="entry name" value="Asp_de-COase-like_dom_sf"/>
</dbReference>
<dbReference type="InterPro" id="IPR003190">
    <property type="entry name" value="Asp_decarbox"/>
</dbReference>
<dbReference type="NCBIfam" id="TIGR00223">
    <property type="entry name" value="panD"/>
    <property type="match status" value="1"/>
</dbReference>
<dbReference type="PANTHER" id="PTHR21012">
    <property type="entry name" value="ASPARTATE 1-DECARBOXYLASE"/>
    <property type="match status" value="1"/>
</dbReference>
<dbReference type="PANTHER" id="PTHR21012:SF0">
    <property type="entry name" value="ASPARTATE 1-DECARBOXYLASE"/>
    <property type="match status" value="1"/>
</dbReference>
<dbReference type="Pfam" id="PF02261">
    <property type="entry name" value="Asp_decarbox"/>
    <property type="match status" value="1"/>
</dbReference>
<dbReference type="PIRSF" id="PIRSF006246">
    <property type="entry name" value="Asp_decarbox"/>
    <property type="match status" value="1"/>
</dbReference>
<dbReference type="SUPFAM" id="SSF50692">
    <property type="entry name" value="ADC-like"/>
    <property type="match status" value="1"/>
</dbReference>
<sequence length="139" mass="14885">MLRTMLKSKIHRATVTCADLHYVGSVTIDADLMDAADLLEGEQVTIVDIDNGARLVTYAITGERGSGVIGINGAAAHLVHPGDLVILIAYATMDDARARTYQPRIVFVDAYNKPIDMGHDPAFVPENAGELLDPRLGVG</sequence>
<proteinExistence type="inferred from homology"/>
<evidence type="ECO:0000255" key="1">
    <source>
        <dbReference type="HAMAP-Rule" id="MF_00446"/>
    </source>
</evidence>
<organism>
    <name type="scientific">Mycobacterium bovis (strain BCG / Tokyo 172 / ATCC 35737 / TMC 1019)</name>
    <dbReference type="NCBI Taxonomy" id="561275"/>
    <lineage>
        <taxon>Bacteria</taxon>
        <taxon>Bacillati</taxon>
        <taxon>Actinomycetota</taxon>
        <taxon>Actinomycetes</taxon>
        <taxon>Mycobacteriales</taxon>
        <taxon>Mycobacteriaceae</taxon>
        <taxon>Mycobacterium</taxon>
        <taxon>Mycobacterium tuberculosis complex</taxon>
    </lineage>
</organism>